<reference key="1">
    <citation type="journal article" date="2007" name="J. Bacteriol.">
        <title>Genome of the opportunistic pathogen Streptococcus sanguinis.</title>
        <authorList>
            <person name="Xu P."/>
            <person name="Alves J.M."/>
            <person name="Kitten T."/>
            <person name="Brown A."/>
            <person name="Chen Z."/>
            <person name="Ozaki L.S."/>
            <person name="Manque P."/>
            <person name="Ge X."/>
            <person name="Serrano M.G."/>
            <person name="Puiu D."/>
            <person name="Hendricks S."/>
            <person name="Wang Y."/>
            <person name="Chaplin M.D."/>
            <person name="Akan D."/>
            <person name="Paik S."/>
            <person name="Peterson D.L."/>
            <person name="Macrina F.L."/>
            <person name="Buck G.A."/>
        </authorList>
    </citation>
    <scope>NUCLEOTIDE SEQUENCE [LARGE SCALE GENOMIC DNA]</scope>
    <source>
        <strain>SK36</strain>
    </source>
</reference>
<accession>A3CQ60</accession>
<protein>
    <recommendedName>
        <fullName evidence="1">Beta-ketoacyl-[acyl-carrier-protein] synthase III</fullName>
        <shortName evidence="1">Beta-ketoacyl-ACP synthase III</shortName>
        <shortName evidence="1">KAS III</shortName>
        <ecNumber evidence="1">2.3.1.180</ecNumber>
    </recommendedName>
    <alternativeName>
        <fullName evidence="1">3-oxoacyl-[acyl-carrier-protein] synthase 3</fullName>
    </alternativeName>
    <alternativeName>
        <fullName evidence="1">3-oxoacyl-[acyl-carrier-protein] synthase III</fullName>
    </alternativeName>
</protein>
<evidence type="ECO:0000255" key="1">
    <source>
        <dbReference type="HAMAP-Rule" id="MF_01815"/>
    </source>
</evidence>
<sequence length="324" mass="34765">MNYAKISQVAHYAPRQVVSNDDLAEIMDTSDEWISSRTGIKNRHLSSDETTSDLATKVAENLLQKSGISAQDLDFIIVATITPDSLMPSAAARVQANIGAKNAFAFDLTAACSGFIFALSTGEKFISSGRYQKGLVIGSETLSKTVDWSDRSTAVLFGDGAGGVLLESASEQHFLAESQFTDGSRGDSLTCGKIGLSSPFSEKGENQPYLTMDGRAIFDFAIRDVARSIKETIESSQLSAEDLDFLLLHQANIRILDKMAKKLGVAREKLPANMMEYGNTSAASIPILLSECVEQGLIKLNGNQTILMSGFGGGLTWGTLIVTI</sequence>
<dbReference type="EC" id="2.3.1.180" evidence="1"/>
<dbReference type="EMBL" id="CP000387">
    <property type="protein sequence ID" value="ABN45315.1"/>
    <property type="molecule type" value="Genomic_DNA"/>
</dbReference>
<dbReference type="RefSeq" id="WP_004192131.1">
    <property type="nucleotide sequence ID" value="NC_009009.1"/>
</dbReference>
<dbReference type="RefSeq" id="YP_001035865.1">
    <property type="nucleotide sequence ID" value="NC_009009.1"/>
</dbReference>
<dbReference type="SMR" id="A3CQ60"/>
<dbReference type="STRING" id="388919.SSA_1940"/>
<dbReference type="KEGG" id="ssa:SSA_1940"/>
<dbReference type="PATRIC" id="fig|388919.9.peg.1839"/>
<dbReference type="eggNOG" id="COG0332">
    <property type="taxonomic scope" value="Bacteria"/>
</dbReference>
<dbReference type="HOGENOM" id="CLU_039592_4_1_9"/>
<dbReference type="OrthoDB" id="9815506at2"/>
<dbReference type="UniPathway" id="UPA00094"/>
<dbReference type="Proteomes" id="UP000002148">
    <property type="component" value="Chromosome"/>
</dbReference>
<dbReference type="GO" id="GO:0005737">
    <property type="term" value="C:cytoplasm"/>
    <property type="evidence" value="ECO:0007669"/>
    <property type="project" value="UniProtKB-SubCell"/>
</dbReference>
<dbReference type="GO" id="GO:0004315">
    <property type="term" value="F:3-oxoacyl-[acyl-carrier-protein] synthase activity"/>
    <property type="evidence" value="ECO:0007669"/>
    <property type="project" value="InterPro"/>
</dbReference>
<dbReference type="GO" id="GO:0033818">
    <property type="term" value="F:beta-ketoacyl-acyl-carrier-protein synthase III activity"/>
    <property type="evidence" value="ECO:0007669"/>
    <property type="project" value="UniProtKB-UniRule"/>
</dbReference>
<dbReference type="GO" id="GO:0006633">
    <property type="term" value="P:fatty acid biosynthetic process"/>
    <property type="evidence" value="ECO:0007669"/>
    <property type="project" value="UniProtKB-UniRule"/>
</dbReference>
<dbReference type="CDD" id="cd00830">
    <property type="entry name" value="KAS_III"/>
    <property type="match status" value="1"/>
</dbReference>
<dbReference type="FunFam" id="3.40.47.10:FF:000004">
    <property type="entry name" value="3-oxoacyl-[acyl-carrier-protein] synthase 3"/>
    <property type="match status" value="1"/>
</dbReference>
<dbReference type="Gene3D" id="3.40.47.10">
    <property type="match status" value="1"/>
</dbReference>
<dbReference type="HAMAP" id="MF_01815">
    <property type="entry name" value="FabH"/>
    <property type="match status" value="1"/>
</dbReference>
<dbReference type="InterPro" id="IPR013747">
    <property type="entry name" value="ACP_syn_III_C"/>
</dbReference>
<dbReference type="InterPro" id="IPR013751">
    <property type="entry name" value="ACP_syn_III_N"/>
</dbReference>
<dbReference type="InterPro" id="IPR004655">
    <property type="entry name" value="FabH"/>
</dbReference>
<dbReference type="InterPro" id="IPR016039">
    <property type="entry name" value="Thiolase-like"/>
</dbReference>
<dbReference type="NCBIfam" id="TIGR00747">
    <property type="entry name" value="fabH"/>
    <property type="match status" value="1"/>
</dbReference>
<dbReference type="NCBIfam" id="NF006829">
    <property type="entry name" value="PRK09352.1"/>
    <property type="match status" value="1"/>
</dbReference>
<dbReference type="PANTHER" id="PTHR43091">
    <property type="entry name" value="3-OXOACYL-[ACYL-CARRIER-PROTEIN] SYNTHASE"/>
    <property type="match status" value="1"/>
</dbReference>
<dbReference type="PANTHER" id="PTHR43091:SF1">
    <property type="entry name" value="BETA-KETOACYL-[ACYL-CARRIER-PROTEIN] SYNTHASE III, CHLOROPLASTIC"/>
    <property type="match status" value="1"/>
</dbReference>
<dbReference type="Pfam" id="PF08545">
    <property type="entry name" value="ACP_syn_III"/>
    <property type="match status" value="1"/>
</dbReference>
<dbReference type="Pfam" id="PF08541">
    <property type="entry name" value="ACP_syn_III_C"/>
    <property type="match status" value="1"/>
</dbReference>
<dbReference type="SUPFAM" id="SSF53901">
    <property type="entry name" value="Thiolase-like"/>
    <property type="match status" value="1"/>
</dbReference>
<comment type="function">
    <text evidence="1">Catalyzes the condensation reaction of fatty acid synthesis by the addition to an acyl acceptor of two carbons from malonyl-ACP. Catalyzes the first condensation reaction which initiates fatty acid synthesis and may therefore play a role in governing the total rate of fatty acid production. Possesses both acetoacetyl-ACP synthase and acetyl transacylase activities. Its substrate specificity determines the biosynthesis of branched-chain and/or straight-chain of fatty acids.</text>
</comment>
<comment type="catalytic activity">
    <reaction evidence="1">
        <text>malonyl-[ACP] + acetyl-CoA + H(+) = 3-oxobutanoyl-[ACP] + CO2 + CoA</text>
        <dbReference type="Rhea" id="RHEA:12080"/>
        <dbReference type="Rhea" id="RHEA-COMP:9623"/>
        <dbReference type="Rhea" id="RHEA-COMP:9625"/>
        <dbReference type="ChEBI" id="CHEBI:15378"/>
        <dbReference type="ChEBI" id="CHEBI:16526"/>
        <dbReference type="ChEBI" id="CHEBI:57287"/>
        <dbReference type="ChEBI" id="CHEBI:57288"/>
        <dbReference type="ChEBI" id="CHEBI:78449"/>
        <dbReference type="ChEBI" id="CHEBI:78450"/>
        <dbReference type="EC" id="2.3.1.180"/>
    </reaction>
</comment>
<comment type="pathway">
    <text evidence="1">Lipid metabolism; fatty acid biosynthesis.</text>
</comment>
<comment type="subunit">
    <text evidence="1">Homodimer.</text>
</comment>
<comment type="subcellular location">
    <subcellularLocation>
        <location evidence="1">Cytoplasm</location>
    </subcellularLocation>
</comment>
<comment type="domain">
    <text evidence="1">The last Arg residue of the ACP-binding site is essential for the weak association between ACP/AcpP and FabH.</text>
</comment>
<comment type="similarity">
    <text evidence="1">Belongs to the thiolase-like superfamily. FabH family.</text>
</comment>
<feature type="chain" id="PRO_1000056427" description="Beta-ketoacyl-[acyl-carrier-protein] synthase III">
    <location>
        <begin position="1"/>
        <end position="324"/>
    </location>
</feature>
<feature type="region of interest" description="ACP-binding" evidence="1">
    <location>
        <begin position="250"/>
        <end position="254"/>
    </location>
</feature>
<feature type="active site" evidence="1">
    <location>
        <position position="112"/>
    </location>
</feature>
<feature type="active site" evidence="1">
    <location>
        <position position="249"/>
    </location>
</feature>
<feature type="active site" evidence="1">
    <location>
        <position position="279"/>
    </location>
</feature>
<name>FABH_STRSV</name>
<keyword id="KW-0012">Acyltransferase</keyword>
<keyword id="KW-0963">Cytoplasm</keyword>
<keyword id="KW-0275">Fatty acid biosynthesis</keyword>
<keyword id="KW-0276">Fatty acid metabolism</keyword>
<keyword id="KW-0444">Lipid biosynthesis</keyword>
<keyword id="KW-0443">Lipid metabolism</keyword>
<keyword id="KW-0511">Multifunctional enzyme</keyword>
<keyword id="KW-1185">Reference proteome</keyword>
<keyword id="KW-0808">Transferase</keyword>
<proteinExistence type="inferred from homology"/>
<gene>
    <name evidence="1" type="primary">fabH</name>
    <name type="ordered locus">SSA_1940</name>
</gene>
<organism>
    <name type="scientific">Streptococcus sanguinis (strain SK36)</name>
    <dbReference type="NCBI Taxonomy" id="388919"/>
    <lineage>
        <taxon>Bacteria</taxon>
        <taxon>Bacillati</taxon>
        <taxon>Bacillota</taxon>
        <taxon>Bacilli</taxon>
        <taxon>Lactobacillales</taxon>
        <taxon>Streptococcaceae</taxon>
        <taxon>Streptococcus</taxon>
    </lineage>
</organism>